<keyword id="KW-0106">Calcium</keyword>
<keyword id="KW-0130">Cell adhesion</keyword>
<keyword id="KW-1003">Cell membrane</keyword>
<keyword id="KW-0325">Glycoprotein</keyword>
<keyword id="KW-0472">Membrane</keyword>
<keyword id="KW-0479">Metal-binding</keyword>
<keyword id="KW-1185">Reference proteome</keyword>
<keyword id="KW-0677">Repeat</keyword>
<keyword id="KW-0732">Signal</keyword>
<keyword id="KW-0812">Transmembrane</keyword>
<keyword id="KW-1133">Transmembrane helix</keyword>
<dbReference type="EMBL" id="AB053260">
    <property type="protein sequence ID" value="BAB20634.1"/>
    <property type="molecule type" value="mRNA"/>
</dbReference>
<dbReference type="EMBL" id="AE014297">
    <property type="protein sequence ID" value="AAF55327.3"/>
    <property type="molecule type" value="Genomic_DNA"/>
</dbReference>
<dbReference type="EMBL" id="BT010226">
    <property type="protein sequence ID" value="AAQ23544.1"/>
    <property type="molecule type" value="mRNA"/>
</dbReference>
<dbReference type="RefSeq" id="NP_650554.3">
    <property type="nucleotide sequence ID" value="NM_142297.4"/>
</dbReference>
<dbReference type="SMR" id="Q9VEU1"/>
<dbReference type="BioGRID" id="67051">
    <property type="interactions" value="3"/>
</dbReference>
<dbReference type="DIP" id="DIP-18418N"/>
<dbReference type="FunCoup" id="Q9VEU1">
    <property type="interactions" value="20"/>
</dbReference>
<dbReference type="IntAct" id="Q9VEU1">
    <property type="interactions" value="5"/>
</dbReference>
<dbReference type="STRING" id="7227.FBpp0290916"/>
<dbReference type="GlyCosmos" id="Q9VEU1">
    <property type="glycosylation" value="19 sites, No reported glycans"/>
</dbReference>
<dbReference type="GlyGen" id="Q9VEU1">
    <property type="glycosylation" value="19 sites"/>
</dbReference>
<dbReference type="PaxDb" id="7227-FBpp0290916"/>
<dbReference type="EnsemblMetazoa" id="FBtr0301702">
    <property type="protein sequence ID" value="FBpp0290916"/>
    <property type="gene ID" value="FBgn0038439"/>
</dbReference>
<dbReference type="GeneID" id="42006"/>
<dbReference type="KEGG" id="dme:Dmel_CG14900"/>
<dbReference type="UCSC" id="CG14900-RA">
    <property type="organism name" value="d. melanogaster"/>
</dbReference>
<dbReference type="AGR" id="FB:FBgn0038439"/>
<dbReference type="CTD" id="42006"/>
<dbReference type="FlyBase" id="FBgn0038439">
    <property type="gene designation" value="Cad89D"/>
</dbReference>
<dbReference type="VEuPathDB" id="VectorBase:FBgn0038439"/>
<dbReference type="eggNOG" id="KOG3594">
    <property type="taxonomic scope" value="Eukaryota"/>
</dbReference>
<dbReference type="GeneTree" id="ENSGT00940000167267"/>
<dbReference type="HOGENOM" id="CLU_001273_0_0_1"/>
<dbReference type="InParanoid" id="Q9VEU1"/>
<dbReference type="OMA" id="NCAVGTE"/>
<dbReference type="OrthoDB" id="6252479at2759"/>
<dbReference type="SignaLink" id="Q9VEU1"/>
<dbReference type="BioGRID-ORCS" id="42006">
    <property type="hits" value="0 hits in 1 CRISPR screen"/>
</dbReference>
<dbReference type="GenomeRNAi" id="42006"/>
<dbReference type="PRO" id="PR:Q9VEU1"/>
<dbReference type="Proteomes" id="UP000000803">
    <property type="component" value="Chromosome 3R"/>
</dbReference>
<dbReference type="Bgee" id="FBgn0038439">
    <property type="expression patterns" value="Expressed in embryo and 3 other cell types or tissues"/>
</dbReference>
<dbReference type="GO" id="GO:0005886">
    <property type="term" value="C:plasma membrane"/>
    <property type="evidence" value="ECO:0000250"/>
    <property type="project" value="FlyBase"/>
</dbReference>
<dbReference type="GO" id="GO:0005509">
    <property type="term" value="F:calcium ion binding"/>
    <property type="evidence" value="ECO:0000255"/>
    <property type="project" value="FlyBase"/>
</dbReference>
<dbReference type="GO" id="GO:0016339">
    <property type="term" value="P:calcium-dependent cell-cell adhesion via plasma membrane cell adhesion molecules"/>
    <property type="evidence" value="ECO:0000250"/>
    <property type="project" value="FlyBase"/>
</dbReference>
<dbReference type="GO" id="GO:0098609">
    <property type="term" value="P:cell-cell adhesion"/>
    <property type="evidence" value="ECO:0000318"/>
    <property type="project" value="GO_Central"/>
</dbReference>
<dbReference type="GO" id="GO:0044331">
    <property type="term" value="P:cell-cell adhesion mediated by cadherin"/>
    <property type="evidence" value="ECO:0000255"/>
    <property type="project" value="FlyBase"/>
</dbReference>
<dbReference type="GO" id="GO:0007156">
    <property type="term" value="P:homophilic cell adhesion via plasma membrane adhesion molecules"/>
    <property type="evidence" value="ECO:0007669"/>
    <property type="project" value="InterPro"/>
</dbReference>
<dbReference type="CDD" id="cd11304">
    <property type="entry name" value="Cadherin_repeat"/>
    <property type="match status" value="12"/>
</dbReference>
<dbReference type="FunFam" id="2.60.40.60:FF:000266">
    <property type="entry name" value="Cadherin 23"/>
    <property type="match status" value="1"/>
</dbReference>
<dbReference type="FunFam" id="2.60.40.60:FF:000452">
    <property type="entry name" value="Cadherin-89D"/>
    <property type="match status" value="1"/>
</dbReference>
<dbReference type="FunFam" id="2.60.40.60:FF:000814">
    <property type="entry name" value="Cadherin-89D"/>
    <property type="match status" value="1"/>
</dbReference>
<dbReference type="FunFam" id="2.60.40.60:FF:000402">
    <property type="entry name" value="cadherin-89D"/>
    <property type="match status" value="1"/>
</dbReference>
<dbReference type="FunFam" id="2.60.40.60:FF:000415">
    <property type="entry name" value="cadherin-89D"/>
    <property type="match status" value="1"/>
</dbReference>
<dbReference type="FunFam" id="2.60.40.60:FF:000466">
    <property type="entry name" value="cadherin-89D"/>
    <property type="match status" value="1"/>
</dbReference>
<dbReference type="FunFam" id="2.60.40.60:FF:000476">
    <property type="entry name" value="cadherin-89D"/>
    <property type="match status" value="1"/>
</dbReference>
<dbReference type="FunFam" id="2.60.40.60:FF:000020">
    <property type="entry name" value="Dachsous cadherin-related 1b"/>
    <property type="match status" value="1"/>
</dbReference>
<dbReference type="Gene3D" id="2.60.40.60">
    <property type="entry name" value="Cadherins"/>
    <property type="match status" value="13"/>
</dbReference>
<dbReference type="InterPro" id="IPR002126">
    <property type="entry name" value="Cadherin-like_dom"/>
</dbReference>
<dbReference type="InterPro" id="IPR015919">
    <property type="entry name" value="Cadherin-like_sf"/>
</dbReference>
<dbReference type="InterPro" id="IPR020894">
    <property type="entry name" value="Cadherin_CS"/>
</dbReference>
<dbReference type="PANTHER" id="PTHR24026:SF129">
    <property type="entry name" value="CADHERIN-89D"/>
    <property type="match status" value="1"/>
</dbReference>
<dbReference type="PANTHER" id="PTHR24026">
    <property type="entry name" value="FAT ATYPICAL CADHERIN-RELATED"/>
    <property type="match status" value="1"/>
</dbReference>
<dbReference type="Pfam" id="PF00028">
    <property type="entry name" value="Cadherin"/>
    <property type="match status" value="6"/>
</dbReference>
<dbReference type="PRINTS" id="PR00205">
    <property type="entry name" value="CADHERIN"/>
</dbReference>
<dbReference type="SMART" id="SM00112">
    <property type="entry name" value="CA"/>
    <property type="match status" value="12"/>
</dbReference>
<dbReference type="SUPFAM" id="SSF49313">
    <property type="entry name" value="Cadherin-like"/>
    <property type="match status" value="11"/>
</dbReference>
<dbReference type="PROSITE" id="PS00232">
    <property type="entry name" value="CADHERIN_1"/>
    <property type="match status" value="7"/>
</dbReference>
<dbReference type="PROSITE" id="PS50268">
    <property type="entry name" value="CADHERIN_2"/>
    <property type="match status" value="12"/>
</dbReference>
<proteinExistence type="evidence at transcript level"/>
<gene>
    <name type="primary">Cad89D</name>
    <name type="ORF">CG14900</name>
</gene>
<comment type="function">
    <text evidence="1">Cadherins are calcium-dependent cell adhesion proteins. They preferentially interact with themselves in a homophilic manner in connecting cells (By similarity).</text>
</comment>
<comment type="subcellular location">
    <subcellularLocation>
        <location evidence="5">Cell membrane</location>
        <topology evidence="5">Single-pass type I membrane protein</topology>
    </subcellularLocation>
</comment>
<comment type="domain">
    <text evidence="1">Three calcium ions are usually bound at the interface of each cadherin domain and rigidify the connections, imparting a strong curvature to the full-length ectodomain.</text>
</comment>
<sequence length="2240" mass="250636">MDSEAYPMKSSVKISQKKKASQDMAVICVWVMPLAVFGLIAIGQAAKTGQVQASSGSCAFHTLDGVAAESEGVRFIRLREDAQVGKEILRLQAYPRSTAALKGADASGDHKYFNLTEHNATTLVVSLARSLERLVDRDVPRNLLKFRILCAGKQEKLEEGSYLSITVYIEDVNDNAPEFLNVPYVVDVDENTSIESIIFEGVQAFDRDKPNTPNSEVHFSMSTVPEQLSADGSPYFALKSPHRPLLILKRELDFDNGIRQFKLPIFAWDRGTPANQANTTITINVRDVDDLPPKFTEGVYRTRINEFYPMTGVPIRIPLYFAPPIMAFDQDSLNASLVYDIISGNERQLFRVNPHNGVMYLQKEIDLEEESLPGNTFVLQLEARQKDNPLKKALARIEVEVLDLNDNVPEFEADYYNISIVENLPTGFSVLQVNAVDRDQGENSEFLYNLVETKDAAGAFRIDSRTGWITVRDDRLLDREQRRSIQLNVEALERNPSYLDDKHLKKPGPSKVQVEITLLDTNDNTPKFEHGNLYEFKVPINAPTGYVIGQVVAHDPDEGPNGHLLYELQRPKGSGYIPFRLDNKNGTIYVGGPLRRGRIAVFVEATDQPTNPSERRFSLAVITIEVYATIDDQAIDFVGAPYEFWVGANTPLGTSVGQVRTTLIYEGGDEIMYDLLHTYSEGVPFAIEERSGIITVIRELSEFKRKVYQFEAVANYLFANSSQSLVMSRSSSPLTTIASPAELSDEGVLITNLTIHIVNKPEQKVPLRPVIEEINMNVIHFHVEENVVGGIIGQLLYKNGINLVNNELGTYREMPSEPTSRNITMGSRFRSRNRSRSSKSKRRLPRRLVGDANIKLRYIIANQQEVVNKISITEDGTLLTLTGLDREQQPSYELTVIVEYSTGLVSGAGIYQVNIKVDDVNDNAPKFNALTYVGLINENCVVGTELSMNHAILIQDADEGPNAEFRVQLQGDYSDEFSIEYVNGTSSENSTHHKMPSTTGAFNIFNLTDQWNDEFKYQELHTTFMQTNFKLSSGPYFRISYTGKRGLDREKQQLYNLKIIAADTGGLSGYAHLTVLVADVNDNAPMFERISVFKDSRLEIREYTTDMEIYFVESSSGMTAPQATAAMMLAPPPYHIPGSPRFNVDRERSVGAGLGVVARAKSRRRMVRALTTKCPLFAIYEDTPVGTKVLQLSASDEDFGKNALLHYELQGEQVERTPGMPMLRVHGVKYFAIDKLSGELSVNYPLSANIEIMLNLTVTDIDGLKDSTCLRFTVMDVNNHAPTFKKSWYSFDTPEGEYKDSVLGQLTAIDMDFGENANITYTLSDSHLPFTIKPASGVLKIGGQLDRELKDKYSFQVIATDNAPVMQRMSSSVDVEVNVLDINDNRPEFIGYDDQTKAVKFIPSVADRTLMLPVYKAYLDRSTQPGTFVRQLTAIDKDNVGNGNGLVLYSIRHQEMQAPLFQIDSRDGTISTISRINGYNDYEHLNVSVIASDVGSPALSATAIVIVNLQGQAVTDPPKSTPKPEPPANVTVFQHAYYEVKLTENNEAPIEVMRLNLSAGLNPENYRWSLWLEEGLDETDAHPPFEYDAKNMLLYALKPFDREHISRYQLRIRADRLSREARNYARVSYPVVDERIEGLSLNECRILVHIADENDNAPKFRGNGQPIVAVLPQSASFGYPVTRVEANDLDEGLNAEIRYRLLNEPARLFGIDELSGNIRLLGELSRTEHIYGFDVKATDRMGADDGRSGIVNVFVYIINEAKQVRLVVAGMPVEVERRIEGLMEALSDAIGKDVRVRLLEPYSGGLEPATNAYIYAVDPHTNSIMEMEQLQDALAGLQLDALQLQQQKLDGGKPMPRILELAEFGQLARPAHASASSFMGGLEFVTVVLLALISLGALIAACCYVCMRQKRRLWSQRDFSASDAGLTYTIAGIGSPRGQKQRRQRQQRHTQRCSKGSTGSQRPTSAFMPESVCSSAQTQSTATATEKLEQQLHHHHQQQAMATQQQHHQYLNEQQRQQKREYIDVPLPKSIAKAAAVTSGGDGAVGVGSTPFVLKYNACQPVNNLNNYETSLFSLHSTGQDSGVEFLSSRELYETSPDSFQHGGSKRGNNTEVLCPRHAKAHLELRQPNTDSSDTYEDSLKTDEPLVAHNCRSANCEHRQHQQHPSHHPHYQNTRFEKRSCVRHSFSGVKDDLMQQSPQISLRPRGHALRNSMNDLEQRLHNLEQSFRRPLEFSKSNSLF</sequence>
<organism>
    <name type="scientific">Drosophila melanogaster</name>
    <name type="common">Fruit fly</name>
    <dbReference type="NCBI Taxonomy" id="7227"/>
    <lineage>
        <taxon>Eukaryota</taxon>
        <taxon>Metazoa</taxon>
        <taxon>Ecdysozoa</taxon>
        <taxon>Arthropoda</taxon>
        <taxon>Hexapoda</taxon>
        <taxon>Insecta</taxon>
        <taxon>Pterygota</taxon>
        <taxon>Neoptera</taxon>
        <taxon>Endopterygota</taxon>
        <taxon>Diptera</taxon>
        <taxon>Brachycera</taxon>
        <taxon>Muscomorpha</taxon>
        <taxon>Ephydroidea</taxon>
        <taxon>Drosophilidae</taxon>
        <taxon>Drosophila</taxon>
        <taxon>Sophophora</taxon>
    </lineage>
</organism>
<reference key="1">
    <citation type="submission" date="2001-01" db="EMBL/GenBank/DDBJ databases">
        <title>A novel member of the Drosophila cadherin superfamily, Cad89D.</title>
        <authorList>
            <person name="Hirano S."/>
            <person name="Kimura H."/>
            <person name="Takeichi M."/>
            <person name="Uemura T."/>
        </authorList>
    </citation>
    <scope>NUCLEOTIDE SEQUENCE [MRNA]</scope>
</reference>
<reference key="2">
    <citation type="journal article" date="2000" name="Science">
        <title>The genome sequence of Drosophila melanogaster.</title>
        <authorList>
            <person name="Adams M.D."/>
            <person name="Celniker S.E."/>
            <person name="Holt R.A."/>
            <person name="Evans C.A."/>
            <person name="Gocayne J.D."/>
            <person name="Amanatides P.G."/>
            <person name="Scherer S.E."/>
            <person name="Li P.W."/>
            <person name="Hoskins R.A."/>
            <person name="Galle R.F."/>
            <person name="George R.A."/>
            <person name="Lewis S.E."/>
            <person name="Richards S."/>
            <person name="Ashburner M."/>
            <person name="Henderson S.N."/>
            <person name="Sutton G.G."/>
            <person name="Wortman J.R."/>
            <person name="Yandell M.D."/>
            <person name="Zhang Q."/>
            <person name="Chen L.X."/>
            <person name="Brandon R.C."/>
            <person name="Rogers Y.-H.C."/>
            <person name="Blazej R.G."/>
            <person name="Champe M."/>
            <person name="Pfeiffer B.D."/>
            <person name="Wan K.H."/>
            <person name="Doyle C."/>
            <person name="Baxter E.G."/>
            <person name="Helt G."/>
            <person name="Nelson C.R."/>
            <person name="Miklos G.L.G."/>
            <person name="Abril J.F."/>
            <person name="Agbayani A."/>
            <person name="An H.-J."/>
            <person name="Andrews-Pfannkoch C."/>
            <person name="Baldwin D."/>
            <person name="Ballew R.M."/>
            <person name="Basu A."/>
            <person name="Baxendale J."/>
            <person name="Bayraktaroglu L."/>
            <person name="Beasley E.M."/>
            <person name="Beeson K.Y."/>
            <person name="Benos P.V."/>
            <person name="Berman B.P."/>
            <person name="Bhandari D."/>
            <person name="Bolshakov S."/>
            <person name="Borkova D."/>
            <person name="Botchan M.R."/>
            <person name="Bouck J."/>
            <person name="Brokstein P."/>
            <person name="Brottier P."/>
            <person name="Burtis K.C."/>
            <person name="Busam D.A."/>
            <person name="Butler H."/>
            <person name="Cadieu E."/>
            <person name="Center A."/>
            <person name="Chandra I."/>
            <person name="Cherry J.M."/>
            <person name="Cawley S."/>
            <person name="Dahlke C."/>
            <person name="Davenport L.B."/>
            <person name="Davies P."/>
            <person name="de Pablos B."/>
            <person name="Delcher A."/>
            <person name="Deng Z."/>
            <person name="Mays A.D."/>
            <person name="Dew I."/>
            <person name="Dietz S.M."/>
            <person name="Dodson K."/>
            <person name="Doup L.E."/>
            <person name="Downes M."/>
            <person name="Dugan-Rocha S."/>
            <person name="Dunkov B.C."/>
            <person name="Dunn P."/>
            <person name="Durbin K.J."/>
            <person name="Evangelista C.C."/>
            <person name="Ferraz C."/>
            <person name="Ferriera S."/>
            <person name="Fleischmann W."/>
            <person name="Fosler C."/>
            <person name="Gabrielian A.E."/>
            <person name="Garg N.S."/>
            <person name="Gelbart W.M."/>
            <person name="Glasser K."/>
            <person name="Glodek A."/>
            <person name="Gong F."/>
            <person name="Gorrell J.H."/>
            <person name="Gu Z."/>
            <person name="Guan P."/>
            <person name="Harris M."/>
            <person name="Harris N.L."/>
            <person name="Harvey D.A."/>
            <person name="Heiman T.J."/>
            <person name="Hernandez J.R."/>
            <person name="Houck J."/>
            <person name="Hostin D."/>
            <person name="Houston K.A."/>
            <person name="Howland T.J."/>
            <person name="Wei M.-H."/>
            <person name="Ibegwam C."/>
            <person name="Jalali M."/>
            <person name="Kalush F."/>
            <person name="Karpen G.H."/>
            <person name="Ke Z."/>
            <person name="Kennison J.A."/>
            <person name="Ketchum K.A."/>
            <person name="Kimmel B.E."/>
            <person name="Kodira C.D."/>
            <person name="Kraft C.L."/>
            <person name="Kravitz S."/>
            <person name="Kulp D."/>
            <person name="Lai Z."/>
            <person name="Lasko P."/>
            <person name="Lei Y."/>
            <person name="Levitsky A.A."/>
            <person name="Li J.H."/>
            <person name="Li Z."/>
            <person name="Liang Y."/>
            <person name="Lin X."/>
            <person name="Liu X."/>
            <person name="Mattei B."/>
            <person name="McIntosh T.C."/>
            <person name="McLeod M.P."/>
            <person name="McPherson D."/>
            <person name="Merkulov G."/>
            <person name="Milshina N.V."/>
            <person name="Mobarry C."/>
            <person name="Morris J."/>
            <person name="Moshrefi A."/>
            <person name="Mount S.M."/>
            <person name="Moy M."/>
            <person name="Murphy B."/>
            <person name="Murphy L."/>
            <person name="Muzny D.M."/>
            <person name="Nelson D.L."/>
            <person name="Nelson D.R."/>
            <person name="Nelson K.A."/>
            <person name="Nixon K."/>
            <person name="Nusskern D.R."/>
            <person name="Pacleb J.M."/>
            <person name="Palazzolo M."/>
            <person name="Pittman G.S."/>
            <person name="Pan S."/>
            <person name="Pollard J."/>
            <person name="Puri V."/>
            <person name="Reese M.G."/>
            <person name="Reinert K."/>
            <person name="Remington K."/>
            <person name="Saunders R.D.C."/>
            <person name="Scheeler F."/>
            <person name="Shen H."/>
            <person name="Shue B.C."/>
            <person name="Siden-Kiamos I."/>
            <person name="Simpson M."/>
            <person name="Skupski M.P."/>
            <person name="Smith T.J."/>
            <person name="Spier E."/>
            <person name="Spradling A.C."/>
            <person name="Stapleton M."/>
            <person name="Strong R."/>
            <person name="Sun E."/>
            <person name="Svirskas R."/>
            <person name="Tector C."/>
            <person name="Turner R."/>
            <person name="Venter E."/>
            <person name="Wang A.H."/>
            <person name="Wang X."/>
            <person name="Wang Z.-Y."/>
            <person name="Wassarman D.A."/>
            <person name="Weinstock G.M."/>
            <person name="Weissenbach J."/>
            <person name="Williams S.M."/>
            <person name="Woodage T."/>
            <person name="Worley K.C."/>
            <person name="Wu D."/>
            <person name="Yang S."/>
            <person name="Yao Q.A."/>
            <person name="Ye J."/>
            <person name="Yeh R.-F."/>
            <person name="Zaveri J.S."/>
            <person name="Zhan M."/>
            <person name="Zhang G."/>
            <person name="Zhao Q."/>
            <person name="Zheng L."/>
            <person name="Zheng X.H."/>
            <person name="Zhong F.N."/>
            <person name="Zhong W."/>
            <person name="Zhou X."/>
            <person name="Zhu S.C."/>
            <person name="Zhu X."/>
            <person name="Smith H.O."/>
            <person name="Gibbs R.A."/>
            <person name="Myers E.W."/>
            <person name="Rubin G.M."/>
            <person name="Venter J.C."/>
        </authorList>
    </citation>
    <scope>NUCLEOTIDE SEQUENCE [LARGE SCALE GENOMIC DNA]</scope>
    <source>
        <strain>Berkeley</strain>
    </source>
</reference>
<reference key="3">
    <citation type="journal article" date="2002" name="Genome Biol.">
        <title>Annotation of the Drosophila melanogaster euchromatic genome: a systematic review.</title>
        <authorList>
            <person name="Misra S."/>
            <person name="Crosby M.A."/>
            <person name="Mungall C.J."/>
            <person name="Matthews B.B."/>
            <person name="Campbell K.S."/>
            <person name="Hradecky P."/>
            <person name="Huang Y."/>
            <person name="Kaminker J.S."/>
            <person name="Millburn G.H."/>
            <person name="Prochnik S.E."/>
            <person name="Smith C.D."/>
            <person name="Tupy J.L."/>
            <person name="Whitfield E.J."/>
            <person name="Bayraktaroglu L."/>
            <person name="Berman B.P."/>
            <person name="Bettencourt B.R."/>
            <person name="Celniker S.E."/>
            <person name="de Grey A.D.N.J."/>
            <person name="Drysdale R.A."/>
            <person name="Harris N.L."/>
            <person name="Richter J."/>
            <person name="Russo S."/>
            <person name="Schroeder A.J."/>
            <person name="Shu S.Q."/>
            <person name="Stapleton M."/>
            <person name="Yamada C."/>
            <person name="Ashburner M."/>
            <person name="Gelbart W.M."/>
            <person name="Rubin G.M."/>
            <person name="Lewis S.E."/>
        </authorList>
    </citation>
    <scope>GENOME REANNOTATION</scope>
    <source>
        <strain>Berkeley</strain>
    </source>
</reference>
<reference key="4">
    <citation type="submission" date="2003-08" db="EMBL/GenBank/DDBJ databases">
        <authorList>
            <person name="Stapleton M."/>
            <person name="Brokstein P."/>
            <person name="Hong L."/>
            <person name="Agbayani A."/>
            <person name="Carlson J."/>
            <person name="Champe M."/>
            <person name="Chavez C."/>
            <person name="Dorsett V."/>
            <person name="Dresnek D."/>
            <person name="Farfan D."/>
            <person name="Frise E."/>
            <person name="George R."/>
            <person name="Gonzalez M."/>
            <person name="Guarin H."/>
            <person name="Kronmiller B."/>
            <person name="Li P."/>
            <person name="Liao G."/>
            <person name="Miranda A."/>
            <person name="Mungall C.J."/>
            <person name="Nunoo J."/>
            <person name="Pacleb J."/>
            <person name="Paragas V."/>
            <person name="Park S."/>
            <person name="Patel S."/>
            <person name="Phouanenavong S."/>
            <person name="Wan K."/>
            <person name="Yu C."/>
            <person name="Lewis S.E."/>
            <person name="Rubin G.M."/>
            <person name="Celniker S."/>
        </authorList>
    </citation>
    <scope>NUCLEOTIDE SEQUENCE [LARGE SCALE MRNA]</scope>
    <source>
        <strain>Berkeley</strain>
        <tissue>Embryo</tissue>
    </source>
</reference>
<name>CAD89_DROME</name>
<evidence type="ECO:0000250" key="1"/>
<evidence type="ECO:0000255" key="2"/>
<evidence type="ECO:0000255" key="3">
    <source>
        <dbReference type="PROSITE-ProRule" id="PRU00043"/>
    </source>
</evidence>
<evidence type="ECO:0000256" key="4">
    <source>
        <dbReference type="SAM" id="MobiDB-lite"/>
    </source>
</evidence>
<evidence type="ECO:0000305" key="5"/>
<accession>Q9VEU1</accession>
<accession>Q6NR53</accession>
<accession>Q9GR86</accession>
<protein>
    <recommendedName>
        <fullName>Cadherin-89D</fullName>
    </recommendedName>
</protein>
<feature type="signal peptide" evidence="2">
    <location>
        <begin position="1"/>
        <end status="unknown"/>
    </location>
</feature>
<feature type="chain" id="PRO_0000004008" description="Cadherin-89D">
    <location>
        <begin status="unknown"/>
        <end position="2240"/>
    </location>
</feature>
<feature type="topological domain" description="Extracellular" evidence="2">
    <location>
        <begin status="unknown"/>
        <end position="1883"/>
    </location>
</feature>
<feature type="transmembrane region" description="Helical" evidence="2">
    <location>
        <begin position="1884"/>
        <end position="1904"/>
    </location>
</feature>
<feature type="topological domain" description="Cytoplasmic" evidence="2">
    <location>
        <begin position="1905"/>
        <end position="2240"/>
    </location>
</feature>
<feature type="domain" description="Cadherin 1" evidence="3">
    <location>
        <begin position="70"/>
        <end position="179"/>
    </location>
</feature>
<feature type="domain" description="Cadherin 2" evidence="3">
    <location>
        <begin position="180"/>
        <end position="295"/>
    </location>
</feature>
<feature type="domain" description="Cadherin 3" evidence="3">
    <location>
        <begin position="296"/>
        <end position="411"/>
    </location>
</feature>
<feature type="domain" description="Cadherin 4" evidence="3">
    <location>
        <begin position="412"/>
        <end position="528"/>
    </location>
</feature>
<feature type="domain" description="Cadherin 5" evidence="3">
    <location>
        <begin position="529"/>
        <end position="643"/>
    </location>
</feature>
<feature type="domain" description="Cadherin 6" evidence="3">
    <location>
        <begin position="824"/>
        <end position="927"/>
    </location>
</feature>
<feature type="domain" description="Cadherin 7" evidence="3">
    <location>
        <begin position="928"/>
        <end position="1087"/>
    </location>
</feature>
<feature type="domain" description="Cadherin 8" evidence="3">
    <location>
        <begin position="1171"/>
        <end position="1284"/>
    </location>
</feature>
<feature type="domain" description="Cadherin 9" evidence="3">
    <location>
        <begin position="1285"/>
        <end position="1389"/>
    </location>
</feature>
<feature type="domain" description="Cadherin 10" evidence="3">
    <location>
        <begin position="1411"/>
        <end position="1520"/>
    </location>
</feature>
<feature type="domain" description="Cadherin 11" evidence="3">
    <location>
        <begin position="1534"/>
        <end position="1660"/>
    </location>
</feature>
<feature type="domain" description="Cadherin 12" evidence="3">
    <location>
        <begin position="1661"/>
        <end position="1774"/>
    </location>
</feature>
<feature type="region of interest" description="Disordered" evidence="4">
    <location>
        <begin position="814"/>
        <end position="844"/>
    </location>
</feature>
<feature type="region of interest" description="Disordered" evidence="4">
    <location>
        <begin position="1930"/>
        <end position="1972"/>
    </location>
</feature>
<feature type="region of interest" description="Disordered" evidence="4">
    <location>
        <begin position="2121"/>
        <end position="2140"/>
    </location>
</feature>
<feature type="compositionally biased region" description="Basic residues" evidence="4">
    <location>
        <begin position="829"/>
        <end position="844"/>
    </location>
</feature>
<feature type="compositionally biased region" description="Basic residues" evidence="4">
    <location>
        <begin position="1939"/>
        <end position="1952"/>
    </location>
</feature>
<feature type="compositionally biased region" description="Polar residues" evidence="4">
    <location>
        <begin position="1953"/>
        <end position="1964"/>
    </location>
</feature>
<feature type="glycosylation site" description="N-linked (GlcNAc...) asparagine" evidence="2">
    <location>
        <position position="114"/>
    </location>
</feature>
<feature type="glycosylation site" description="N-linked (GlcNAc...) asparagine" evidence="2">
    <location>
        <position position="119"/>
    </location>
</feature>
<feature type="glycosylation site" description="N-linked (GlcNAc...) asparagine" evidence="2">
    <location>
        <position position="191"/>
    </location>
</feature>
<feature type="glycosylation site" description="N-linked (GlcNAc...) asparagine" evidence="2">
    <location>
        <position position="278"/>
    </location>
</feature>
<feature type="glycosylation site" description="N-linked (GlcNAc...) asparagine" evidence="2">
    <location>
        <position position="334"/>
    </location>
</feature>
<feature type="glycosylation site" description="N-linked (GlcNAc...) asparagine" evidence="2">
    <location>
        <position position="417"/>
    </location>
</feature>
<feature type="glycosylation site" description="N-linked (GlcNAc...) asparagine" evidence="2">
    <location>
        <position position="585"/>
    </location>
</feature>
<feature type="glycosylation site" description="N-linked (GlcNAc...) asparagine" evidence="2">
    <location>
        <position position="720"/>
    </location>
</feature>
<feature type="glycosylation site" description="N-linked (GlcNAc...) asparagine" evidence="2">
    <location>
        <position position="752"/>
    </location>
</feature>
<feature type="glycosylation site" description="N-linked (GlcNAc...) asparagine" evidence="2">
    <location>
        <position position="822"/>
    </location>
</feature>
<feature type="glycosylation site" description="N-linked (GlcNAc...) asparagine" evidence="2">
    <location>
        <position position="833"/>
    </location>
</feature>
<feature type="glycosylation site" description="N-linked (GlcNAc...) asparagine" evidence="2">
    <location>
        <position position="983"/>
    </location>
</feature>
<feature type="glycosylation site" description="N-linked (GlcNAc...) asparagine" evidence="2">
    <location>
        <position position="989"/>
    </location>
</feature>
<feature type="glycosylation site" description="N-linked (GlcNAc...) asparagine" evidence="2">
    <location>
        <position position="1006"/>
    </location>
</feature>
<feature type="glycosylation site" description="N-linked (GlcNAc...) asparagine" evidence="2">
    <location>
        <position position="1255"/>
    </location>
</feature>
<feature type="glycosylation site" description="N-linked (GlcNAc...) asparagine" evidence="2">
    <location>
        <position position="1318"/>
    </location>
</feature>
<feature type="glycosylation site" description="N-linked (GlcNAc...) asparagine" evidence="2">
    <location>
        <position position="1486"/>
    </location>
</feature>
<feature type="glycosylation site" description="N-linked (GlcNAc...) asparagine" evidence="2">
    <location>
        <position position="1529"/>
    </location>
</feature>
<feature type="glycosylation site" description="N-linked (GlcNAc...) asparagine" evidence="2">
    <location>
        <position position="1556"/>
    </location>
</feature>
<feature type="sequence conflict" description="In Ref. 1; BAB20634." evidence="5" ref="1">
    <original>M</original>
    <variation>R</variation>
    <location>
        <position position="8"/>
    </location>
</feature>
<feature type="sequence conflict" description="In Ref. 1; BAB20634." evidence="5" ref="1">
    <original>D</original>
    <variation>E</variation>
    <location>
        <position position="208"/>
    </location>
</feature>
<feature type="sequence conflict" description="In Ref. 1; BAB20634." evidence="5" ref="1">
    <original>N</original>
    <variation>Y</variation>
    <location>
        <position position="305"/>
    </location>
</feature>
<feature type="sequence conflict" description="In Ref. 1; BAB20634." evidence="5" ref="1">
    <original>M</original>
    <variation>I</variation>
    <location>
        <position position="310"/>
    </location>
</feature>
<feature type="sequence conflict" description="In Ref. 4; AAQ23544." evidence="5" ref="4">
    <original>T</original>
    <variation>S</variation>
    <location>
        <position position="311"/>
    </location>
</feature>
<feature type="sequence conflict" description="In Ref. 4; AAQ23544." evidence="5" ref="4">
    <original>A</original>
    <variation>G</variation>
    <location>
        <position position="456"/>
    </location>
</feature>
<feature type="sequence conflict" description="In Ref. 1; BAB20634." evidence="5" ref="1">
    <original>E</original>
    <variation>D</variation>
    <location>
        <position position="702"/>
    </location>
</feature>
<feature type="sequence conflict" description="In Ref. 1; BAB20634." evidence="5" ref="1">
    <original>I</original>
    <variation>L</variation>
    <location>
        <position position="823"/>
    </location>
</feature>
<feature type="sequence conflict" description="In Ref. 4; AAQ23544." evidence="5" ref="4">
    <original>E</original>
    <variation>G</variation>
    <location>
        <position position="945"/>
    </location>
</feature>
<feature type="sequence conflict" description="In Ref. 1; BAB20634." evidence="5" ref="1">
    <original>S</original>
    <variation>P</variation>
    <location>
        <position position="997"/>
    </location>
</feature>
<feature type="sequence conflict" description="In Ref. 1; BAB20634." evidence="5" ref="1">
    <original>T</original>
    <variation>A</variation>
    <location>
        <position position="1187"/>
    </location>
</feature>
<feature type="sequence conflict" description="In Ref. 1; BAB20634." evidence="5" ref="1">
    <original>V</original>
    <variation>G</variation>
    <location>
        <position position="1258"/>
    </location>
</feature>
<feature type="sequence conflict" description="In Ref. 1; BAB20634." evidence="5" ref="1">
    <original>I</original>
    <variation>M</variation>
    <location>
        <position position="1319"/>
    </location>
</feature>
<feature type="sequence conflict" description="In Ref. 1; BAB20634." evidence="5" ref="1">
    <original>F</original>
    <variation>S</variation>
    <location>
        <position position="1330"/>
    </location>
</feature>
<feature type="sequence conflict" description="In Ref. 1; BAB20634." evidence="5" ref="1">
    <original>G</original>
    <variation>S</variation>
    <location>
        <position position="1342"/>
    </location>
</feature>
<feature type="sequence conflict" description="In Ref. 1; BAB20634." evidence="5" ref="1">
    <original>P</original>
    <variation>A</variation>
    <location>
        <position position="1497"/>
    </location>
</feature>
<feature type="sequence conflict" description="In Ref. 1; BAB20634." evidence="5" ref="1">
    <original>I</original>
    <variation>V</variation>
    <location>
        <position position="1504"/>
    </location>
</feature>
<feature type="sequence conflict" description="In Ref. 1; BAB20634." evidence="5" ref="1">
    <original>S</original>
    <variation>C</variation>
    <location>
        <position position="1606"/>
    </location>
</feature>
<feature type="sequence conflict" description="In Ref. 4; AAQ23544." evidence="5" ref="4">
    <original>S</original>
    <variation>N</variation>
    <location>
        <position position="1618"/>
    </location>
</feature>
<feature type="sequence conflict" description="In Ref. 1; BAB20634." evidence="5" ref="1">
    <original>D</original>
    <variation>G</variation>
    <location>
        <position position="1633"/>
    </location>
</feature>
<feature type="sequence conflict" description="In Ref. 1; BAB20634." evidence="5" ref="1">
    <original>F</original>
    <variation>Y</variation>
    <location>
        <position position="1660"/>
    </location>
</feature>
<feature type="sequence conflict" description="In Ref. 1; BAB20634." evidence="5" ref="1">
    <original>D</original>
    <variation>V</variation>
    <location>
        <position position="1745"/>
    </location>
</feature>
<feature type="sequence conflict" description="In Ref. 1; BAB20634." evidence="5" ref="1">
    <original>P</original>
    <variation>R</variation>
    <location>
        <position position="1801"/>
    </location>
</feature>
<feature type="sequence conflict" description="In Ref. 1; BAB20634." evidence="5" ref="1">
    <original>L</original>
    <variation>R</variation>
    <location>
        <position position="1892"/>
    </location>
</feature>
<feature type="sequence conflict" description="In Ref. 4; AAQ23544." evidence="5" ref="4">
    <original>T</original>
    <variation>A</variation>
    <location>
        <position position="2095"/>
    </location>
</feature>
<feature type="sequence conflict" description="In Ref. 4; AAQ23544." evidence="5" ref="4">
    <original>D</original>
    <variation>G</variation>
    <location>
        <position position="2138"/>
    </location>
</feature>